<name>EFTS_CELJU</name>
<sequence>MSAVTPALVKELRDRTGLGMMECKKALGDANGDIELAIENLRKVSGLKAAKKEGRTAADGVVAVKVAADNSYGVAVEVNSETDFVARDAGFLAFVNSVVEKAFAAKQTDVAAVMAGELEIAREALVQKIGEKISVRRINLVEGGVVGGYVHLNNRIAVLVQLEGGSEDVAKDVAMHVAAVNPQVVSADQMPADVVEKEKEIIRAQPDMAGKPAEIVEKMIVGRISKFLKEASLVDQPFVKNPEQTVAQFAKAGGATVKSFVRLEVGEGIEVAVVDFAAEVAAQVAASAKS</sequence>
<keyword id="KW-0963">Cytoplasm</keyword>
<keyword id="KW-0251">Elongation factor</keyword>
<keyword id="KW-0648">Protein biosynthesis</keyword>
<keyword id="KW-1185">Reference proteome</keyword>
<proteinExistence type="inferred from homology"/>
<accession>B3PBP7</accession>
<comment type="function">
    <text evidence="1">Associates with the EF-Tu.GDP complex and induces the exchange of GDP to GTP. It remains bound to the aminoacyl-tRNA.EF-Tu.GTP complex up to the GTP hydrolysis stage on the ribosome.</text>
</comment>
<comment type="subcellular location">
    <subcellularLocation>
        <location evidence="1">Cytoplasm</location>
    </subcellularLocation>
</comment>
<comment type="similarity">
    <text evidence="1">Belongs to the EF-Ts family.</text>
</comment>
<reference key="1">
    <citation type="journal article" date="2008" name="J. Bacteriol.">
        <title>Insights into plant cell wall degradation from the genome sequence of the soil bacterium Cellvibrio japonicus.</title>
        <authorList>
            <person name="DeBoy R.T."/>
            <person name="Mongodin E.F."/>
            <person name="Fouts D.E."/>
            <person name="Tailford L.E."/>
            <person name="Khouri H."/>
            <person name="Emerson J.B."/>
            <person name="Mohamoud Y."/>
            <person name="Watkins K."/>
            <person name="Henrissat B."/>
            <person name="Gilbert H.J."/>
            <person name="Nelson K.E."/>
        </authorList>
    </citation>
    <scope>NUCLEOTIDE SEQUENCE [LARGE SCALE GENOMIC DNA]</scope>
    <source>
        <strain>Ueda107</strain>
    </source>
</reference>
<protein>
    <recommendedName>
        <fullName evidence="1">Elongation factor Ts</fullName>
        <shortName evidence="1">EF-Ts</shortName>
    </recommendedName>
</protein>
<gene>
    <name evidence="1" type="primary">tsf</name>
    <name type="ordered locus">CJA_1111</name>
</gene>
<dbReference type="EMBL" id="CP000934">
    <property type="protein sequence ID" value="ACE84996.1"/>
    <property type="molecule type" value="Genomic_DNA"/>
</dbReference>
<dbReference type="RefSeq" id="WP_012486759.1">
    <property type="nucleotide sequence ID" value="NC_010995.1"/>
</dbReference>
<dbReference type="SMR" id="B3PBP7"/>
<dbReference type="STRING" id="498211.CJA_1111"/>
<dbReference type="KEGG" id="cja:CJA_1111"/>
<dbReference type="eggNOG" id="COG0264">
    <property type="taxonomic scope" value="Bacteria"/>
</dbReference>
<dbReference type="HOGENOM" id="CLU_047155_0_2_6"/>
<dbReference type="OrthoDB" id="9808348at2"/>
<dbReference type="Proteomes" id="UP000001036">
    <property type="component" value="Chromosome"/>
</dbReference>
<dbReference type="GO" id="GO:0005737">
    <property type="term" value="C:cytoplasm"/>
    <property type="evidence" value="ECO:0007669"/>
    <property type="project" value="UniProtKB-SubCell"/>
</dbReference>
<dbReference type="GO" id="GO:0003746">
    <property type="term" value="F:translation elongation factor activity"/>
    <property type="evidence" value="ECO:0007669"/>
    <property type="project" value="UniProtKB-UniRule"/>
</dbReference>
<dbReference type="CDD" id="cd14275">
    <property type="entry name" value="UBA_EF-Ts"/>
    <property type="match status" value="1"/>
</dbReference>
<dbReference type="FunFam" id="1.10.286.20:FF:000001">
    <property type="entry name" value="Elongation factor Ts"/>
    <property type="match status" value="1"/>
</dbReference>
<dbReference type="FunFam" id="1.10.8.10:FF:000001">
    <property type="entry name" value="Elongation factor Ts"/>
    <property type="match status" value="1"/>
</dbReference>
<dbReference type="Gene3D" id="1.10.286.20">
    <property type="match status" value="1"/>
</dbReference>
<dbReference type="Gene3D" id="1.10.8.10">
    <property type="entry name" value="DNA helicase RuvA subunit, C-terminal domain"/>
    <property type="match status" value="1"/>
</dbReference>
<dbReference type="Gene3D" id="3.30.479.20">
    <property type="entry name" value="Elongation factor Ts, dimerisation domain"/>
    <property type="match status" value="2"/>
</dbReference>
<dbReference type="HAMAP" id="MF_00050">
    <property type="entry name" value="EF_Ts"/>
    <property type="match status" value="1"/>
</dbReference>
<dbReference type="InterPro" id="IPR036402">
    <property type="entry name" value="EF-Ts_dimer_sf"/>
</dbReference>
<dbReference type="InterPro" id="IPR001816">
    <property type="entry name" value="Transl_elong_EFTs/EF1B"/>
</dbReference>
<dbReference type="InterPro" id="IPR014039">
    <property type="entry name" value="Transl_elong_EFTs/EF1B_dimer"/>
</dbReference>
<dbReference type="InterPro" id="IPR018101">
    <property type="entry name" value="Transl_elong_Ts_CS"/>
</dbReference>
<dbReference type="InterPro" id="IPR009060">
    <property type="entry name" value="UBA-like_sf"/>
</dbReference>
<dbReference type="NCBIfam" id="TIGR00116">
    <property type="entry name" value="tsf"/>
    <property type="match status" value="1"/>
</dbReference>
<dbReference type="PANTHER" id="PTHR11741">
    <property type="entry name" value="ELONGATION FACTOR TS"/>
    <property type="match status" value="1"/>
</dbReference>
<dbReference type="PANTHER" id="PTHR11741:SF0">
    <property type="entry name" value="ELONGATION FACTOR TS, MITOCHONDRIAL"/>
    <property type="match status" value="1"/>
</dbReference>
<dbReference type="Pfam" id="PF00889">
    <property type="entry name" value="EF_TS"/>
    <property type="match status" value="1"/>
</dbReference>
<dbReference type="SUPFAM" id="SSF54713">
    <property type="entry name" value="Elongation factor Ts (EF-Ts), dimerisation domain"/>
    <property type="match status" value="2"/>
</dbReference>
<dbReference type="SUPFAM" id="SSF46934">
    <property type="entry name" value="UBA-like"/>
    <property type="match status" value="1"/>
</dbReference>
<dbReference type="PROSITE" id="PS01126">
    <property type="entry name" value="EF_TS_1"/>
    <property type="match status" value="1"/>
</dbReference>
<dbReference type="PROSITE" id="PS01127">
    <property type="entry name" value="EF_TS_2"/>
    <property type="match status" value="1"/>
</dbReference>
<organism>
    <name type="scientific">Cellvibrio japonicus (strain Ueda107)</name>
    <name type="common">Pseudomonas fluorescens subsp. cellulosa</name>
    <dbReference type="NCBI Taxonomy" id="498211"/>
    <lineage>
        <taxon>Bacteria</taxon>
        <taxon>Pseudomonadati</taxon>
        <taxon>Pseudomonadota</taxon>
        <taxon>Gammaproteobacteria</taxon>
        <taxon>Cellvibrionales</taxon>
        <taxon>Cellvibrionaceae</taxon>
        <taxon>Cellvibrio</taxon>
    </lineage>
</organism>
<evidence type="ECO:0000255" key="1">
    <source>
        <dbReference type="HAMAP-Rule" id="MF_00050"/>
    </source>
</evidence>
<feature type="chain" id="PRO_1000116707" description="Elongation factor Ts">
    <location>
        <begin position="1"/>
        <end position="290"/>
    </location>
</feature>
<feature type="region of interest" description="Involved in Mg(2+) ion dislocation from EF-Tu" evidence="1">
    <location>
        <begin position="82"/>
        <end position="85"/>
    </location>
</feature>